<dbReference type="EMBL" id="AE009439">
    <property type="protein sequence ID" value="AAM01614.1"/>
    <property type="molecule type" value="Genomic_DNA"/>
</dbReference>
<dbReference type="RefSeq" id="WP_011018769.1">
    <property type="nucleotide sequence ID" value="NC_003551.1"/>
</dbReference>
<dbReference type="SMR" id="P58829"/>
<dbReference type="STRING" id="190192.MK0399"/>
<dbReference type="PaxDb" id="190192-MK0399"/>
<dbReference type="EnsemblBacteria" id="AAM01614">
    <property type="protein sequence ID" value="AAM01614"/>
    <property type="gene ID" value="MK0399"/>
</dbReference>
<dbReference type="GeneID" id="1477702"/>
<dbReference type="KEGG" id="mka:MK0399"/>
<dbReference type="HOGENOM" id="CLU_134829_1_0_2"/>
<dbReference type="InParanoid" id="P58829"/>
<dbReference type="OrthoDB" id="7819at2157"/>
<dbReference type="Proteomes" id="UP000001826">
    <property type="component" value="Chromosome"/>
</dbReference>
<dbReference type="Gene3D" id="3.30.1440.10">
    <property type="match status" value="1"/>
</dbReference>
<dbReference type="HAMAP" id="MF_01112">
    <property type="entry name" value="UPF0201"/>
    <property type="match status" value="1"/>
</dbReference>
<dbReference type="InterPro" id="IPR002739">
    <property type="entry name" value="PAB1135-like"/>
</dbReference>
<dbReference type="InterPro" id="IPR022803">
    <property type="entry name" value="Ribosomal_uL5_dom_sf"/>
</dbReference>
<dbReference type="PANTHER" id="PTHR39652">
    <property type="entry name" value="UPF0201 PROTEIN TK1335"/>
    <property type="match status" value="1"/>
</dbReference>
<dbReference type="PANTHER" id="PTHR39652:SF1">
    <property type="entry name" value="UPF0201 PROTEIN TK1335"/>
    <property type="match status" value="1"/>
</dbReference>
<dbReference type="Pfam" id="PF01877">
    <property type="entry name" value="RNA_binding"/>
    <property type="match status" value="1"/>
</dbReference>
<dbReference type="SUPFAM" id="SSF55282">
    <property type="entry name" value="RL5-like"/>
    <property type="match status" value="1"/>
</dbReference>
<comment type="similarity">
    <text evidence="1">Belongs to the UPF0201 family.</text>
</comment>
<name>Y399_METKA</name>
<keyword id="KW-1185">Reference proteome</keyword>
<proteinExistence type="inferred from homology"/>
<feature type="chain" id="PRO_0000094511" description="UPF0201 protein MK0399">
    <location>
        <begin position="1"/>
        <end position="159"/>
    </location>
</feature>
<gene>
    <name type="ordered locus">MK0399</name>
</gene>
<accession>P58829</accession>
<sequence length="159" mass="18195">MISRVVLTTYVYPTEDEEKVRKAVGNLFDLEMFEEREEEMGDLRRLEFVCEGPQARLSLGRIYELLREQEILDAARRVLREGVTAEGSILFHLNKQAAFAGSVSFAEGGESPLGPIVVEVFPERPEDVEKVIDWLAPETIDGKPIYEVKKPRLREEELE</sequence>
<reference key="1">
    <citation type="journal article" date="2002" name="Proc. Natl. Acad. Sci. U.S.A.">
        <title>The complete genome of hyperthermophile Methanopyrus kandleri AV19 and monophyly of archaeal methanogens.</title>
        <authorList>
            <person name="Slesarev A.I."/>
            <person name="Mezhevaya K.V."/>
            <person name="Makarova K.S."/>
            <person name="Polushin N.N."/>
            <person name="Shcherbinina O.V."/>
            <person name="Shakhova V.V."/>
            <person name="Belova G.I."/>
            <person name="Aravind L."/>
            <person name="Natale D.A."/>
            <person name="Rogozin I.B."/>
            <person name="Tatusov R.L."/>
            <person name="Wolf Y.I."/>
            <person name="Stetter K.O."/>
            <person name="Malykh A.G."/>
            <person name="Koonin E.V."/>
            <person name="Kozyavkin S.A."/>
        </authorList>
    </citation>
    <scope>NUCLEOTIDE SEQUENCE [LARGE SCALE GENOMIC DNA]</scope>
    <source>
        <strain>AV19 / DSM 6324 / JCM 9639 / NBRC 100938</strain>
    </source>
</reference>
<evidence type="ECO:0000255" key="1">
    <source>
        <dbReference type="HAMAP-Rule" id="MF_01112"/>
    </source>
</evidence>
<protein>
    <recommendedName>
        <fullName evidence="1">UPF0201 protein MK0399</fullName>
    </recommendedName>
</protein>
<organism>
    <name type="scientific">Methanopyrus kandleri (strain AV19 / DSM 6324 / JCM 9639 / NBRC 100938)</name>
    <dbReference type="NCBI Taxonomy" id="190192"/>
    <lineage>
        <taxon>Archaea</taxon>
        <taxon>Methanobacteriati</taxon>
        <taxon>Methanobacteriota</taxon>
        <taxon>Methanomada group</taxon>
        <taxon>Methanopyri</taxon>
        <taxon>Methanopyrales</taxon>
        <taxon>Methanopyraceae</taxon>
        <taxon>Methanopyrus</taxon>
    </lineage>
</organism>